<evidence type="ECO:0000255" key="1">
    <source>
        <dbReference type="HAMAP-Rule" id="MF_02011"/>
    </source>
</evidence>
<evidence type="ECO:0000256" key="2">
    <source>
        <dbReference type="SAM" id="MobiDB-lite"/>
    </source>
</evidence>
<proteinExistence type="inferred from homology"/>
<accession>Q6GGW4</accession>
<comment type="function">
    <text evidence="1">Divisome component that associates with the complex late in its assembly, after the Z-ring is formed, and is dependent on DivIC and PBP2B for its recruitment to the divisome. Together with EzrA, is a key component of the system that regulates PBP1 localization during cell cycle progression. Its main role could be the removal of PBP1 from the cell pole after pole maturation is completed. Also contributes to the recruitment of PBP1 to the division complex. Not essential for septum formation.</text>
</comment>
<comment type="subunit">
    <text evidence="1">Forms polymers through the coiled coil domains. Interacts with PBP1, MreC and EzrA.</text>
</comment>
<comment type="subcellular location">
    <subcellularLocation>
        <location evidence="1">Cytoplasm</location>
    </subcellularLocation>
    <text evidence="1">Shuttles between the lateral wall and the division site in a cell cycle-dependent manner.</text>
</comment>
<comment type="similarity">
    <text evidence="1">Belongs to the GpsB family.</text>
</comment>
<dbReference type="EMBL" id="BX571856">
    <property type="protein sequence ID" value="CAG40454.1"/>
    <property type="molecule type" value="Genomic_DNA"/>
</dbReference>
<dbReference type="RefSeq" id="WP_001286320.1">
    <property type="nucleotide sequence ID" value="NC_002952.2"/>
</dbReference>
<dbReference type="SMR" id="Q6GGW4"/>
<dbReference type="GeneID" id="98345812"/>
<dbReference type="KEGG" id="sar:SAR1457"/>
<dbReference type="HOGENOM" id="CLU_140309_1_0_9"/>
<dbReference type="Proteomes" id="UP000000596">
    <property type="component" value="Chromosome"/>
</dbReference>
<dbReference type="GO" id="GO:0005737">
    <property type="term" value="C:cytoplasm"/>
    <property type="evidence" value="ECO:0007669"/>
    <property type="project" value="UniProtKB-SubCell"/>
</dbReference>
<dbReference type="GO" id="GO:0051301">
    <property type="term" value="P:cell division"/>
    <property type="evidence" value="ECO:0007669"/>
    <property type="project" value="UniProtKB-UniRule"/>
</dbReference>
<dbReference type="GO" id="GO:0008360">
    <property type="term" value="P:regulation of cell shape"/>
    <property type="evidence" value="ECO:0007669"/>
    <property type="project" value="UniProtKB-UniRule"/>
</dbReference>
<dbReference type="Gene3D" id="6.10.250.660">
    <property type="match status" value="1"/>
</dbReference>
<dbReference type="HAMAP" id="MF_02011">
    <property type="entry name" value="GpsB"/>
    <property type="match status" value="1"/>
</dbReference>
<dbReference type="InterPro" id="IPR011229">
    <property type="entry name" value="Cell_cycle_GpsB"/>
</dbReference>
<dbReference type="InterPro" id="IPR019933">
    <property type="entry name" value="DivIVA_domain"/>
</dbReference>
<dbReference type="InterPro" id="IPR007793">
    <property type="entry name" value="DivIVA_fam"/>
</dbReference>
<dbReference type="NCBIfam" id="TIGR03544">
    <property type="entry name" value="DivI1A_domain"/>
    <property type="match status" value="1"/>
</dbReference>
<dbReference type="NCBIfam" id="NF010725">
    <property type="entry name" value="PRK14127.1"/>
    <property type="match status" value="1"/>
</dbReference>
<dbReference type="PANTHER" id="PTHR35794:SF1">
    <property type="entry name" value="CELL CYCLE PROTEIN GPSB"/>
    <property type="match status" value="1"/>
</dbReference>
<dbReference type="PANTHER" id="PTHR35794">
    <property type="entry name" value="CELL DIVISION PROTEIN DIVIVA"/>
    <property type="match status" value="1"/>
</dbReference>
<dbReference type="Pfam" id="PF05103">
    <property type="entry name" value="DivIVA"/>
    <property type="match status" value="1"/>
</dbReference>
<dbReference type="PIRSF" id="PIRSF029938">
    <property type="entry name" value="UCP029938"/>
    <property type="match status" value="1"/>
</dbReference>
<name>GPSB_STAAR</name>
<organism>
    <name type="scientific">Staphylococcus aureus (strain MRSA252)</name>
    <dbReference type="NCBI Taxonomy" id="282458"/>
    <lineage>
        <taxon>Bacteria</taxon>
        <taxon>Bacillati</taxon>
        <taxon>Bacillota</taxon>
        <taxon>Bacilli</taxon>
        <taxon>Bacillales</taxon>
        <taxon>Staphylococcaceae</taxon>
        <taxon>Staphylococcus</taxon>
    </lineage>
</organism>
<sequence>MSDVSLKLSAKDIYEKDFEKTMARGYRREEVDAFLDDIIADYQKMADMNNEVVKLSEENHKLKKELEELRLRVATSRPQDNKSFSSNNTTTNTSSNNVDILKRISNLEKAVFGK</sequence>
<feature type="chain" id="PRO_0000337935" description="Cell cycle protein GpsB">
    <location>
        <begin position="1"/>
        <end position="114"/>
    </location>
</feature>
<feature type="region of interest" description="Disordered" evidence="2">
    <location>
        <begin position="74"/>
        <end position="99"/>
    </location>
</feature>
<feature type="coiled-coil region" evidence="1">
    <location>
        <begin position="42"/>
        <end position="77"/>
    </location>
</feature>
<feature type="compositionally biased region" description="Low complexity" evidence="2">
    <location>
        <begin position="85"/>
        <end position="97"/>
    </location>
</feature>
<gene>
    <name evidence="1" type="primary">gpsB</name>
    <name type="ordered locus">SAR1457</name>
</gene>
<protein>
    <recommendedName>
        <fullName evidence="1">Cell cycle protein GpsB</fullName>
    </recommendedName>
    <alternativeName>
        <fullName evidence="1">Guiding PBP1-shuttling protein</fullName>
    </alternativeName>
</protein>
<reference key="1">
    <citation type="journal article" date="2004" name="Proc. Natl. Acad. Sci. U.S.A.">
        <title>Complete genomes of two clinical Staphylococcus aureus strains: evidence for the rapid evolution of virulence and drug resistance.</title>
        <authorList>
            <person name="Holden M.T.G."/>
            <person name="Feil E.J."/>
            <person name="Lindsay J.A."/>
            <person name="Peacock S.J."/>
            <person name="Day N.P.J."/>
            <person name="Enright M.C."/>
            <person name="Foster T.J."/>
            <person name="Moore C.E."/>
            <person name="Hurst L."/>
            <person name="Atkin R."/>
            <person name="Barron A."/>
            <person name="Bason N."/>
            <person name="Bentley S.D."/>
            <person name="Chillingworth C."/>
            <person name="Chillingworth T."/>
            <person name="Churcher C."/>
            <person name="Clark L."/>
            <person name="Corton C."/>
            <person name="Cronin A."/>
            <person name="Doggett J."/>
            <person name="Dowd L."/>
            <person name="Feltwell T."/>
            <person name="Hance Z."/>
            <person name="Harris B."/>
            <person name="Hauser H."/>
            <person name="Holroyd S."/>
            <person name="Jagels K."/>
            <person name="James K.D."/>
            <person name="Lennard N."/>
            <person name="Line A."/>
            <person name="Mayes R."/>
            <person name="Moule S."/>
            <person name="Mungall K."/>
            <person name="Ormond D."/>
            <person name="Quail M.A."/>
            <person name="Rabbinowitsch E."/>
            <person name="Rutherford K.M."/>
            <person name="Sanders M."/>
            <person name="Sharp S."/>
            <person name="Simmonds M."/>
            <person name="Stevens K."/>
            <person name="Whitehead S."/>
            <person name="Barrell B.G."/>
            <person name="Spratt B.G."/>
            <person name="Parkhill J."/>
        </authorList>
    </citation>
    <scope>NUCLEOTIDE SEQUENCE [LARGE SCALE GENOMIC DNA]</scope>
    <source>
        <strain>MRSA252</strain>
    </source>
</reference>
<keyword id="KW-0131">Cell cycle</keyword>
<keyword id="KW-0132">Cell division</keyword>
<keyword id="KW-0133">Cell shape</keyword>
<keyword id="KW-0175">Coiled coil</keyword>
<keyword id="KW-0963">Cytoplasm</keyword>